<comment type="function">
    <text evidence="1">Chaperone required for proper molybdenum cofactor insertion and final assembly of the membrane-bound respiratory nitrate reductase.</text>
</comment>
<comment type="subcellular location">
    <subcellularLocation>
        <location evidence="1">Cytoplasm</location>
    </subcellularLocation>
</comment>
<comment type="similarity">
    <text evidence="2">Belongs to the NarJ/NarW family.</text>
</comment>
<protein>
    <recommendedName>
        <fullName>Probable nitrate reductase molybdenum cofactor assembly chaperone NarJ</fullName>
    </recommendedName>
</protein>
<gene>
    <name type="primary">narJ</name>
    <name type="ordered locus">BSU37260</name>
</gene>
<proteinExistence type="inferred from homology"/>
<evidence type="ECO:0000250" key="1"/>
<evidence type="ECO:0000305" key="2"/>
<feature type="chain" id="PRO_0000096724" description="Probable nitrate reductase molybdenum cofactor assembly chaperone NarJ">
    <location>
        <begin position="1"/>
        <end position="184"/>
    </location>
</feature>
<reference key="1">
    <citation type="journal article" date="1995" name="EMBO J.">
        <title>Anaerobic transcription activation in Bacillus subtilis: identification of distinct FNR-dependent and -independent regulatory mechanisms.</title>
        <authorList>
            <person name="Cruz Ramos H."/>
            <person name="Boursier L."/>
            <person name="Moszer I."/>
            <person name="Kunst F."/>
            <person name="Danchin A."/>
            <person name="Glaser P."/>
        </authorList>
    </citation>
    <scope>NUCLEOTIDE SEQUENCE [GENOMIC DNA]</scope>
</reference>
<reference key="2">
    <citation type="journal article" date="1997" name="Microbiology">
        <title>The Bacillus subtilis genome from gerBC (311 degrees) to licR (334 degrees).</title>
        <authorList>
            <person name="Presecan E."/>
            <person name="Moszer I."/>
            <person name="Boursier L."/>
            <person name="Cruz Ramos H."/>
            <person name="De La Fuente V."/>
            <person name="Hullo M.-F."/>
            <person name="Lelong C."/>
            <person name="Schleich S."/>
            <person name="Sekowska A."/>
            <person name="Song B.H."/>
            <person name="Villani G."/>
            <person name="Kunst F."/>
            <person name="Danchin A."/>
            <person name="Glaser P."/>
        </authorList>
    </citation>
    <scope>NUCLEOTIDE SEQUENCE [GENOMIC DNA]</scope>
    <source>
        <strain>168</strain>
    </source>
</reference>
<reference key="3">
    <citation type="journal article" date="1995" name="FEMS Microbiol. Lett.">
        <title>The anaerobic life of Bacillus subtilis: cloning of the genes encoding the respiratory nitrate reductase system.</title>
        <authorList>
            <person name="Hoffmann T."/>
            <person name="Troup B."/>
            <person name="Szabo A."/>
            <person name="Hungerer C."/>
            <person name="Jahn D."/>
        </authorList>
    </citation>
    <scope>NUCLEOTIDE SEQUENCE [GENOMIC DNA]</scope>
    <source>
        <strain>168 / JH642</strain>
    </source>
</reference>
<reference key="4">
    <citation type="journal article" date="1997" name="Nature">
        <title>The complete genome sequence of the Gram-positive bacterium Bacillus subtilis.</title>
        <authorList>
            <person name="Kunst F."/>
            <person name="Ogasawara N."/>
            <person name="Moszer I."/>
            <person name="Albertini A.M."/>
            <person name="Alloni G."/>
            <person name="Azevedo V."/>
            <person name="Bertero M.G."/>
            <person name="Bessieres P."/>
            <person name="Bolotin A."/>
            <person name="Borchert S."/>
            <person name="Borriss R."/>
            <person name="Boursier L."/>
            <person name="Brans A."/>
            <person name="Braun M."/>
            <person name="Brignell S.C."/>
            <person name="Bron S."/>
            <person name="Brouillet S."/>
            <person name="Bruschi C.V."/>
            <person name="Caldwell B."/>
            <person name="Capuano V."/>
            <person name="Carter N.M."/>
            <person name="Choi S.-K."/>
            <person name="Codani J.-J."/>
            <person name="Connerton I.F."/>
            <person name="Cummings N.J."/>
            <person name="Daniel R.A."/>
            <person name="Denizot F."/>
            <person name="Devine K.M."/>
            <person name="Duesterhoeft A."/>
            <person name="Ehrlich S.D."/>
            <person name="Emmerson P.T."/>
            <person name="Entian K.-D."/>
            <person name="Errington J."/>
            <person name="Fabret C."/>
            <person name="Ferrari E."/>
            <person name="Foulger D."/>
            <person name="Fritz C."/>
            <person name="Fujita M."/>
            <person name="Fujita Y."/>
            <person name="Fuma S."/>
            <person name="Galizzi A."/>
            <person name="Galleron N."/>
            <person name="Ghim S.-Y."/>
            <person name="Glaser P."/>
            <person name="Goffeau A."/>
            <person name="Golightly E.J."/>
            <person name="Grandi G."/>
            <person name="Guiseppi G."/>
            <person name="Guy B.J."/>
            <person name="Haga K."/>
            <person name="Haiech J."/>
            <person name="Harwood C.R."/>
            <person name="Henaut A."/>
            <person name="Hilbert H."/>
            <person name="Holsappel S."/>
            <person name="Hosono S."/>
            <person name="Hullo M.-F."/>
            <person name="Itaya M."/>
            <person name="Jones L.-M."/>
            <person name="Joris B."/>
            <person name="Karamata D."/>
            <person name="Kasahara Y."/>
            <person name="Klaerr-Blanchard M."/>
            <person name="Klein C."/>
            <person name="Kobayashi Y."/>
            <person name="Koetter P."/>
            <person name="Koningstein G."/>
            <person name="Krogh S."/>
            <person name="Kumano M."/>
            <person name="Kurita K."/>
            <person name="Lapidus A."/>
            <person name="Lardinois S."/>
            <person name="Lauber J."/>
            <person name="Lazarevic V."/>
            <person name="Lee S.-M."/>
            <person name="Levine A."/>
            <person name="Liu H."/>
            <person name="Masuda S."/>
            <person name="Mauel C."/>
            <person name="Medigue C."/>
            <person name="Medina N."/>
            <person name="Mellado R.P."/>
            <person name="Mizuno M."/>
            <person name="Moestl D."/>
            <person name="Nakai S."/>
            <person name="Noback M."/>
            <person name="Noone D."/>
            <person name="O'Reilly M."/>
            <person name="Ogawa K."/>
            <person name="Ogiwara A."/>
            <person name="Oudega B."/>
            <person name="Park S.-H."/>
            <person name="Parro V."/>
            <person name="Pohl T.M."/>
            <person name="Portetelle D."/>
            <person name="Porwollik S."/>
            <person name="Prescott A.M."/>
            <person name="Presecan E."/>
            <person name="Pujic P."/>
            <person name="Purnelle B."/>
            <person name="Rapoport G."/>
            <person name="Rey M."/>
            <person name="Reynolds S."/>
            <person name="Rieger M."/>
            <person name="Rivolta C."/>
            <person name="Rocha E."/>
            <person name="Roche B."/>
            <person name="Rose M."/>
            <person name="Sadaie Y."/>
            <person name="Sato T."/>
            <person name="Scanlan E."/>
            <person name="Schleich S."/>
            <person name="Schroeter R."/>
            <person name="Scoffone F."/>
            <person name="Sekiguchi J."/>
            <person name="Sekowska A."/>
            <person name="Seror S.J."/>
            <person name="Serror P."/>
            <person name="Shin B.-S."/>
            <person name="Soldo B."/>
            <person name="Sorokin A."/>
            <person name="Tacconi E."/>
            <person name="Takagi T."/>
            <person name="Takahashi H."/>
            <person name="Takemaru K."/>
            <person name="Takeuchi M."/>
            <person name="Tamakoshi A."/>
            <person name="Tanaka T."/>
            <person name="Terpstra P."/>
            <person name="Tognoni A."/>
            <person name="Tosato V."/>
            <person name="Uchiyama S."/>
            <person name="Vandenbol M."/>
            <person name="Vannier F."/>
            <person name="Vassarotti A."/>
            <person name="Viari A."/>
            <person name="Wambutt R."/>
            <person name="Wedler E."/>
            <person name="Wedler H."/>
            <person name="Weitzenegger T."/>
            <person name="Winters P."/>
            <person name="Wipat A."/>
            <person name="Yamamoto H."/>
            <person name="Yamane K."/>
            <person name="Yasumoto K."/>
            <person name="Yata K."/>
            <person name="Yoshida K."/>
            <person name="Yoshikawa H.-F."/>
            <person name="Zumstein E."/>
            <person name="Yoshikawa H."/>
            <person name="Danchin A."/>
        </authorList>
    </citation>
    <scope>NUCLEOTIDE SEQUENCE [LARGE SCALE GENOMIC DNA]</scope>
    <source>
        <strain>168</strain>
    </source>
</reference>
<name>NARJ_BACSU</name>
<dbReference type="EMBL" id="Z49884">
    <property type="protein sequence ID" value="CAA90047.1"/>
    <property type="molecule type" value="Genomic_DNA"/>
</dbReference>
<dbReference type="EMBL" id="X91819">
    <property type="protein sequence ID" value="CAA62928.1"/>
    <property type="molecule type" value="Genomic_DNA"/>
</dbReference>
<dbReference type="EMBL" id="X85014">
    <property type="protein sequence ID" value="CAA59373.1"/>
    <property type="molecule type" value="Genomic_DNA"/>
</dbReference>
<dbReference type="EMBL" id="AL009126">
    <property type="protein sequence ID" value="CAB15754.1"/>
    <property type="molecule type" value="Genomic_DNA"/>
</dbReference>
<dbReference type="PIR" id="I40428">
    <property type="entry name" value="I40428"/>
</dbReference>
<dbReference type="RefSeq" id="NP_391607.1">
    <property type="nucleotide sequence ID" value="NC_000964.3"/>
</dbReference>
<dbReference type="RefSeq" id="WP_003242466.1">
    <property type="nucleotide sequence ID" value="NZ_OZ025638.1"/>
</dbReference>
<dbReference type="SMR" id="P42178"/>
<dbReference type="FunCoup" id="P42178">
    <property type="interactions" value="132"/>
</dbReference>
<dbReference type="STRING" id="224308.BSU37260"/>
<dbReference type="jPOST" id="P42178"/>
<dbReference type="PaxDb" id="224308-BSU37260"/>
<dbReference type="EnsemblBacteria" id="CAB15754">
    <property type="protein sequence ID" value="CAB15754"/>
    <property type="gene ID" value="BSU_37260"/>
</dbReference>
<dbReference type="GeneID" id="937051"/>
<dbReference type="KEGG" id="bsu:BSU37260"/>
<dbReference type="PATRIC" id="fig|224308.179.peg.4037"/>
<dbReference type="eggNOG" id="COG2180">
    <property type="taxonomic scope" value="Bacteria"/>
</dbReference>
<dbReference type="InParanoid" id="P42178"/>
<dbReference type="OrthoDB" id="5296272at2"/>
<dbReference type="PhylomeDB" id="P42178"/>
<dbReference type="BioCyc" id="BSUB:BSU37260-MONOMER"/>
<dbReference type="Proteomes" id="UP000001570">
    <property type="component" value="Chromosome"/>
</dbReference>
<dbReference type="GO" id="GO:0005737">
    <property type="term" value="C:cytoplasm"/>
    <property type="evidence" value="ECO:0007669"/>
    <property type="project" value="UniProtKB-SubCell"/>
</dbReference>
<dbReference type="GO" id="GO:0016530">
    <property type="term" value="F:metallochaperone activity"/>
    <property type="evidence" value="ECO:0000318"/>
    <property type="project" value="GO_Central"/>
</dbReference>
<dbReference type="GO" id="GO:0051082">
    <property type="term" value="F:unfolded protein binding"/>
    <property type="evidence" value="ECO:0007669"/>
    <property type="project" value="InterPro"/>
</dbReference>
<dbReference type="GO" id="GO:0051131">
    <property type="term" value="P:chaperone-mediated protein complex assembly"/>
    <property type="evidence" value="ECO:0000318"/>
    <property type="project" value="GO_Central"/>
</dbReference>
<dbReference type="GO" id="GO:0042128">
    <property type="term" value="P:nitrate assimilation"/>
    <property type="evidence" value="ECO:0000318"/>
    <property type="project" value="GO_Central"/>
</dbReference>
<dbReference type="FunFam" id="1.10.3480.10:FF:000004">
    <property type="entry name" value="Nitrate reductase molybdenum cofactor assembly chaperone"/>
    <property type="match status" value="1"/>
</dbReference>
<dbReference type="Gene3D" id="1.10.3480.10">
    <property type="entry name" value="TorD-like"/>
    <property type="match status" value="1"/>
</dbReference>
<dbReference type="InterPro" id="IPR020945">
    <property type="entry name" value="DMSO/NO3_reduct_chaperone"/>
</dbReference>
<dbReference type="InterPro" id="IPR003765">
    <property type="entry name" value="NO3_reductase_chaperone_NarJ"/>
</dbReference>
<dbReference type="InterPro" id="IPR036411">
    <property type="entry name" value="TorD-like_sf"/>
</dbReference>
<dbReference type="NCBIfam" id="TIGR00684">
    <property type="entry name" value="narJ"/>
    <property type="match status" value="1"/>
</dbReference>
<dbReference type="PANTHER" id="PTHR43680">
    <property type="entry name" value="NITRATE REDUCTASE MOLYBDENUM COFACTOR ASSEMBLY CHAPERONE"/>
    <property type="match status" value="1"/>
</dbReference>
<dbReference type="PANTHER" id="PTHR43680:SF2">
    <property type="entry name" value="NITRATE REDUCTASE MOLYBDENUM COFACTOR ASSEMBLY CHAPERONE NARJ"/>
    <property type="match status" value="1"/>
</dbReference>
<dbReference type="Pfam" id="PF02613">
    <property type="entry name" value="Nitrate_red_del"/>
    <property type="match status" value="1"/>
</dbReference>
<dbReference type="SUPFAM" id="SSF89155">
    <property type="entry name" value="TorD-like"/>
    <property type="match status" value="1"/>
</dbReference>
<organism>
    <name type="scientific">Bacillus subtilis (strain 168)</name>
    <dbReference type="NCBI Taxonomy" id="224308"/>
    <lineage>
        <taxon>Bacteria</taxon>
        <taxon>Bacillati</taxon>
        <taxon>Bacillota</taxon>
        <taxon>Bacilli</taxon>
        <taxon>Bacillales</taxon>
        <taxon>Bacillaceae</taxon>
        <taxon>Bacillus</taxon>
    </lineage>
</organism>
<keyword id="KW-0143">Chaperone</keyword>
<keyword id="KW-0963">Cytoplasm</keyword>
<keyword id="KW-0534">Nitrate assimilation</keyword>
<keyword id="KW-1185">Reference proteome</keyword>
<accession>P42178</accession>
<sequence length="184" mass="21210">MNTTDRQITFSALSCLLSYPDEEWRAELPDWKALIQEIGNRQIREKLLHFFETSASYSPEALIEHYVYTFDFGKKTNMYVTYFNSGEQRERGIELLHLKNTYEQSGFLPTEKELPDYLPLMLEFAAAAEIEAARSVFEKYLSNVRELASRLEKNDSIYAELLHVLLAALENIGVRESVEGAVQA</sequence>